<feature type="chain" id="PRO_0000072013" description="SRC kinase signaling inhibitor 1">
    <location>
        <begin position="1"/>
        <end position="1197"/>
    </location>
</feature>
<feature type="region of interest" description="Disordered" evidence="5">
    <location>
        <begin position="19"/>
        <end position="80"/>
    </location>
</feature>
<feature type="region of interest" description="Disordered" evidence="5">
    <location>
        <begin position="319"/>
        <end position="415"/>
    </location>
</feature>
<feature type="region of interest" description="Disordered" evidence="5">
    <location>
        <begin position="501"/>
        <end position="676"/>
    </location>
</feature>
<feature type="region of interest" description="Interaction with SNAP25" evidence="6">
    <location>
        <begin position="681"/>
        <end position="731"/>
    </location>
</feature>
<feature type="region of interest" description="Disordered" evidence="5">
    <location>
        <begin position="891"/>
        <end position="949"/>
    </location>
</feature>
<feature type="region of interest" description="Disordered" evidence="5">
    <location>
        <begin position="983"/>
        <end position="1065"/>
    </location>
</feature>
<feature type="region of interest" description="Disordered" evidence="5">
    <location>
        <begin position="1141"/>
        <end position="1163"/>
    </location>
</feature>
<feature type="coiled-coil region" evidence="4">
    <location>
        <begin position="688"/>
        <end position="708"/>
    </location>
</feature>
<feature type="coiled-coil region" evidence="4">
    <location>
        <begin position="760"/>
        <end position="780"/>
    </location>
</feature>
<feature type="compositionally biased region" description="Basic and acidic residues" evidence="5">
    <location>
        <begin position="19"/>
        <end position="45"/>
    </location>
</feature>
<feature type="compositionally biased region" description="Gly residues" evidence="5">
    <location>
        <begin position="65"/>
        <end position="75"/>
    </location>
</feature>
<feature type="compositionally biased region" description="Polar residues" evidence="5">
    <location>
        <begin position="321"/>
        <end position="331"/>
    </location>
</feature>
<feature type="compositionally biased region" description="Low complexity" evidence="5">
    <location>
        <begin position="332"/>
        <end position="341"/>
    </location>
</feature>
<feature type="compositionally biased region" description="Low complexity" evidence="5">
    <location>
        <begin position="348"/>
        <end position="366"/>
    </location>
</feature>
<feature type="compositionally biased region" description="Polar residues" evidence="5">
    <location>
        <begin position="391"/>
        <end position="400"/>
    </location>
</feature>
<feature type="compositionally biased region" description="Basic and acidic residues" evidence="5">
    <location>
        <begin position="404"/>
        <end position="415"/>
    </location>
</feature>
<feature type="compositionally biased region" description="Pro residues" evidence="5">
    <location>
        <begin position="520"/>
        <end position="531"/>
    </location>
</feature>
<feature type="compositionally biased region" description="Basic and acidic residues" evidence="5">
    <location>
        <begin position="595"/>
        <end position="607"/>
    </location>
</feature>
<feature type="compositionally biased region" description="Pro residues" evidence="5">
    <location>
        <begin position="1036"/>
        <end position="1045"/>
    </location>
</feature>
<feature type="modified residue" description="Phosphoserine" evidence="3">
    <location>
        <position position="47"/>
    </location>
</feature>
<feature type="modified residue" description="Phosphoserine" evidence="3">
    <location>
        <position position="52"/>
    </location>
</feature>
<feature type="modified residue" description="Phosphoserine" evidence="2">
    <location>
        <position position="79"/>
    </location>
</feature>
<feature type="modified residue" description="Phosphothreonine" evidence="2">
    <location>
        <position position="86"/>
    </location>
</feature>
<feature type="modified residue" description="Phosphoserine" evidence="2">
    <location>
        <position position="87"/>
    </location>
</feature>
<feature type="modified residue" description="Phosphoserine" evidence="16">
    <location>
        <position position="98"/>
    </location>
</feature>
<feature type="modified residue" description="Phosphoserine" evidence="16">
    <location>
        <position position="178"/>
    </location>
</feature>
<feature type="modified residue" description="Phosphoserine" evidence="16">
    <location>
        <position position="200"/>
    </location>
</feature>
<feature type="modified residue" description="Phosphoserine" evidence="16">
    <location>
        <position position="204"/>
    </location>
</feature>
<feature type="modified residue" description="Phosphoserine" evidence="3">
    <location>
        <position position="214"/>
    </location>
</feature>
<feature type="modified residue" description="Phosphoserine" evidence="16">
    <location>
        <position position="260"/>
    </location>
</feature>
<feature type="modified residue" description="Phosphotyrosine" evidence="3">
    <location>
        <position position="276"/>
    </location>
</feature>
<feature type="modified residue" description="Phosphoserine" evidence="3">
    <location>
        <position position="333"/>
    </location>
</feature>
<feature type="modified residue" description="Phosphoserine" evidence="3">
    <location>
        <position position="342"/>
    </location>
</feature>
<feature type="modified residue" description="Phosphoserine" evidence="3">
    <location>
        <position position="359"/>
    </location>
</feature>
<feature type="modified residue" description="Omega-N-methylarginine" evidence="3">
    <location>
        <position position="364"/>
    </location>
</feature>
<feature type="modified residue" description="Omega-N-methylarginine" evidence="3">
    <location>
        <position position="371"/>
    </location>
</feature>
<feature type="modified residue" description="Phosphoserine" evidence="16">
    <location>
        <position position="378"/>
    </location>
</feature>
<feature type="modified residue" description="Phosphoserine" evidence="3">
    <location>
        <position position="397"/>
    </location>
</feature>
<feature type="modified residue" description="Phosphoserine" evidence="2">
    <location>
        <position position="399"/>
    </location>
</feature>
<feature type="modified residue" description="Phosphotyrosine" evidence="3">
    <location>
        <position position="431"/>
    </location>
</feature>
<feature type="modified residue" description="Phosphoserine" evidence="3">
    <location>
        <position position="527"/>
    </location>
</feature>
<feature type="modified residue" description="Phosphoserine" evidence="3">
    <location>
        <position position="530"/>
    </location>
</feature>
<feature type="modified residue" description="Phosphoserine" evidence="3">
    <location>
        <position position="534"/>
    </location>
</feature>
<feature type="modified residue" description="Omega-N-methylarginine" evidence="3">
    <location>
        <position position="535"/>
    </location>
</feature>
<feature type="modified residue" description="Phosphoserine" evidence="3">
    <location>
        <position position="537"/>
    </location>
</feature>
<feature type="modified residue" description="Phosphoserine" evidence="16">
    <location>
        <position position="547"/>
    </location>
</feature>
<feature type="modified residue" description="Phosphoserine" evidence="3">
    <location>
        <position position="549"/>
    </location>
</feature>
<feature type="modified residue" description="Phosphoserine" evidence="3">
    <location>
        <position position="551"/>
    </location>
</feature>
<feature type="modified residue" description="Phosphoserine" evidence="16">
    <location>
        <position position="556"/>
    </location>
</feature>
<feature type="modified residue" description="Phosphoserine" evidence="3">
    <location>
        <position position="631"/>
    </location>
</feature>
<feature type="modified residue" description="Phosphoserine" evidence="3">
    <location>
        <position position="655"/>
    </location>
</feature>
<feature type="modified residue" description="Phosphothreonine" evidence="3">
    <location>
        <position position="658"/>
    </location>
</feature>
<feature type="modified residue" description="Phosphothreonine" evidence="3">
    <location>
        <position position="671"/>
    </location>
</feature>
<feature type="modified residue" description="Phosphoserine" evidence="3">
    <location>
        <position position="878"/>
    </location>
</feature>
<feature type="modified residue" description="Phosphoserine" evidence="16">
    <location>
        <position position="900"/>
    </location>
</feature>
<feature type="modified residue" description="Phosphothreonine" evidence="2">
    <location>
        <position position="918"/>
    </location>
</feature>
<feature type="modified residue" description="Phosphoserine" evidence="16">
    <location>
        <position position="1021"/>
    </location>
</feature>
<feature type="modified residue" description="Phosphoserine" evidence="16">
    <location>
        <position position="1077"/>
    </location>
</feature>
<feature type="modified residue" description="Phosphoserine" evidence="3">
    <location>
        <position position="1094"/>
    </location>
</feature>
<feature type="splice variant" id="VSP_050633" description="In isoform 2." evidence="10">
    <location>
        <begin position="1174"/>
        <end position="1197"/>
    </location>
</feature>
<proteinExistence type="evidence at protein level"/>
<comment type="function">
    <text evidence="6 8">Acts as a negative regulator of SRC by activating CSK which inhibits SRC activity and downstream signaling, leading to impaired cell spreading and migration. Regulates dendritic spine morphology. Involved in calcium-dependent exocytosis. May play a role in neurotransmitter release or synapse maintenance.</text>
</comment>
<comment type="subunit">
    <text evidence="1 6 7 8">Interacts with BCAR1/p130Cas through its C-terminal domain and with CSK, CTTN and SRC (By similarity). Also interacts with MAPRE3/EB3, SORBS3/vinexin and the N-terminal coiled-coil region of SNAP25.</text>
</comment>
<comment type="interaction">
    <interactant intactId="EBI-1394088">
        <id>Q9QXY2</id>
    </interactant>
    <interactant intactId="EBI-1027214">
        <id>P60881</id>
        <label>Snap25</label>
    </interactant>
    <organismsDiffer>false</organismsDiffer>
    <experiments>3</experiments>
</comment>
<comment type="subcellular location">
    <subcellularLocation>
        <location>Cytoplasm</location>
    </subcellularLocation>
    <subcellularLocation>
        <location evidence="9">Cytoplasm</location>
        <location evidence="9">Cytoskeleton</location>
    </subcellularLocation>
    <subcellularLocation>
        <location>Cell projection</location>
        <location>Axon</location>
    </subcellularLocation>
    <subcellularLocation>
        <location evidence="8">Cell projection</location>
        <location evidence="8">Dendrite</location>
    </subcellularLocation>
    <subcellularLocation>
        <location evidence="7">Presynapse</location>
    </subcellularLocation>
    <subcellularLocation>
        <location evidence="7 8">Postsynapse</location>
    </subcellularLocation>
    <subcellularLocation>
        <location evidence="8">Postsynaptic density</location>
    </subcellularLocation>
    <text evidence="7 8 9">Localized to the perinuclear region, lamellopodia, cortical actin and actin stress fibers but not to focal adhesions. Strongly expressed in axons and dendrites of the CA1 and CA3 hippocampal regions and of the dentate gyrus. Detected in both presynapses and postsynapses and enriched in postsynaptic density fractions.</text>
</comment>
<comment type="alternative products">
    <event type="alternative splicing"/>
    <isoform>
        <id>Q9QXY2-1</id>
        <name evidence="6">1</name>
        <name evidence="10">SNIP-b</name>
        <sequence type="displayed"/>
    </isoform>
    <isoform>
        <id>Q9QXY2-2</id>
        <name evidence="6">2</name>
        <name evidence="10">SNIP-a</name>
        <sequence type="described" ref="VSP_050633"/>
    </isoform>
</comment>
<comment type="tissue specificity">
    <text evidence="6 7">Expressed exclusively in brain. Abundant in telencephalon and expressed moderately in cerebellum, hypothalamus, thalamus, superior and inferior colliculi, and olfactory bulb. No expression detected in medulla oblongata, spinal cord or pituitary gland. Enriched in the neuropil rather than soma in the thalamus, corpus striatum and cerebral cortex. Detected in astrocytes.</text>
</comment>
<comment type="developmental stage">
    <text evidence="7">In the embryo, expression increases dramatically between 14.5 dpc and 18.5 dpc (at protein level).</text>
</comment>
<comment type="PTM">
    <text evidence="2">Tyrosine-phosphorylated in response to EGF and to cell adhesion to integrin ligands.</text>
</comment>
<comment type="similarity">
    <text evidence="13">Belongs to the SRCIN1 family.</text>
</comment>
<accession>Q9QXY2</accession>
<accession>Q9QXY3</accession>
<gene>
    <name evidence="15" type="primary">Srcin1</name>
    <name evidence="11" type="synonym">P140</name>
    <name evidence="12" type="synonym">Snip</name>
</gene>
<organism evidence="14">
    <name type="scientific">Rattus norvegicus</name>
    <name type="common">Rat</name>
    <dbReference type="NCBI Taxonomy" id="10116"/>
    <lineage>
        <taxon>Eukaryota</taxon>
        <taxon>Metazoa</taxon>
        <taxon>Chordata</taxon>
        <taxon>Craniata</taxon>
        <taxon>Vertebrata</taxon>
        <taxon>Euteleostomi</taxon>
        <taxon>Mammalia</taxon>
        <taxon>Eutheria</taxon>
        <taxon>Euarchontoglires</taxon>
        <taxon>Glires</taxon>
        <taxon>Rodentia</taxon>
        <taxon>Myomorpha</taxon>
        <taxon>Muroidea</taxon>
        <taxon>Muridae</taxon>
        <taxon>Murinae</taxon>
        <taxon>Rattus</taxon>
    </lineage>
</organism>
<dbReference type="EMBL" id="AF156981">
    <property type="protein sequence ID" value="AAF25003.1"/>
    <property type="molecule type" value="mRNA"/>
</dbReference>
<dbReference type="EMBL" id="AF156982">
    <property type="protein sequence ID" value="AAF25004.1"/>
    <property type="molecule type" value="mRNA"/>
</dbReference>
<dbReference type="RefSeq" id="NP_001380670.1">
    <molecule id="Q9QXY2-2"/>
    <property type="nucleotide sequence ID" value="NM_001393741.2"/>
</dbReference>
<dbReference type="RefSeq" id="NP_062251.1">
    <molecule id="Q9QXY2-1"/>
    <property type="nucleotide sequence ID" value="NM_019378.3"/>
</dbReference>
<dbReference type="SMR" id="Q9QXY2"/>
<dbReference type="BioGRID" id="248555">
    <property type="interactions" value="7"/>
</dbReference>
<dbReference type="FunCoup" id="Q9QXY2">
    <property type="interactions" value="962"/>
</dbReference>
<dbReference type="IntAct" id="Q9QXY2">
    <property type="interactions" value="7"/>
</dbReference>
<dbReference type="MINT" id="Q9QXY2"/>
<dbReference type="STRING" id="10116.ENSRNOP00000016070"/>
<dbReference type="GlyGen" id="Q9QXY2">
    <property type="glycosylation" value="5 sites, 1 O-linked glycan (1 site)"/>
</dbReference>
<dbReference type="iPTMnet" id="Q9QXY2"/>
<dbReference type="PhosphoSitePlus" id="Q9QXY2"/>
<dbReference type="SwissPalm" id="Q9QXY2"/>
<dbReference type="PaxDb" id="10116-ENSRNOP00000016070"/>
<dbReference type="GeneID" id="56029"/>
<dbReference type="KEGG" id="rno:56029"/>
<dbReference type="UCSC" id="RGD:708439">
    <molecule id="Q9QXY2-1"/>
    <property type="organism name" value="rat"/>
</dbReference>
<dbReference type="AGR" id="RGD:708439"/>
<dbReference type="CTD" id="80725"/>
<dbReference type="RGD" id="708439">
    <property type="gene designation" value="Srcin1"/>
</dbReference>
<dbReference type="VEuPathDB" id="HostDB:ENSRNOG00000011475"/>
<dbReference type="eggNOG" id="ENOG502QPNH">
    <property type="taxonomic scope" value="Eukaryota"/>
</dbReference>
<dbReference type="HOGENOM" id="CLU_002507_0_0_1"/>
<dbReference type="InParanoid" id="Q9QXY2"/>
<dbReference type="PhylomeDB" id="Q9QXY2"/>
<dbReference type="PRO" id="PR:Q9QXY2"/>
<dbReference type="Proteomes" id="UP000002494">
    <property type="component" value="Chromosome 10"/>
</dbReference>
<dbReference type="Bgee" id="ENSRNOG00000011475">
    <property type="expression patterns" value="Expressed in frontal cortex and 17 other cell types or tissues"/>
</dbReference>
<dbReference type="GO" id="GO:0015629">
    <property type="term" value="C:actin cytoskeleton"/>
    <property type="evidence" value="ECO:0000314"/>
    <property type="project" value="RGD"/>
</dbReference>
<dbReference type="GO" id="GO:0030424">
    <property type="term" value="C:axon"/>
    <property type="evidence" value="ECO:0000314"/>
    <property type="project" value="UniProtKB"/>
</dbReference>
<dbReference type="GO" id="GO:0005737">
    <property type="term" value="C:cytoplasm"/>
    <property type="evidence" value="ECO:0000250"/>
    <property type="project" value="UniProtKB"/>
</dbReference>
<dbReference type="GO" id="GO:0030425">
    <property type="term" value="C:dendrite"/>
    <property type="evidence" value="ECO:0000314"/>
    <property type="project" value="UniProtKB"/>
</dbReference>
<dbReference type="GO" id="GO:0030175">
    <property type="term" value="C:filopodium"/>
    <property type="evidence" value="ECO:0000314"/>
    <property type="project" value="RGD"/>
</dbReference>
<dbReference type="GO" id="GO:0098978">
    <property type="term" value="C:glutamatergic synapse"/>
    <property type="evidence" value="ECO:0000266"/>
    <property type="project" value="RGD"/>
</dbReference>
<dbReference type="GO" id="GO:0030027">
    <property type="term" value="C:lamellipodium"/>
    <property type="evidence" value="ECO:0000314"/>
    <property type="project" value="RGD"/>
</dbReference>
<dbReference type="GO" id="GO:0098984">
    <property type="term" value="C:neuron to neuron synapse"/>
    <property type="evidence" value="ECO:0000314"/>
    <property type="project" value="RGD"/>
</dbReference>
<dbReference type="GO" id="GO:0043025">
    <property type="term" value="C:neuronal cell body"/>
    <property type="evidence" value="ECO:0000314"/>
    <property type="project" value="RGD"/>
</dbReference>
<dbReference type="GO" id="GO:0098794">
    <property type="term" value="C:postsynapse"/>
    <property type="evidence" value="ECO:0000314"/>
    <property type="project" value="SynGO"/>
</dbReference>
<dbReference type="GO" id="GO:0014069">
    <property type="term" value="C:postsynaptic density"/>
    <property type="evidence" value="ECO:0000314"/>
    <property type="project" value="UniProtKB"/>
</dbReference>
<dbReference type="GO" id="GO:0098793">
    <property type="term" value="C:presynapse"/>
    <property type="evidence" value="ECO:0000314"/>
    <property type="project" value="SynGO"/>
</dbReference>
<dbReference type="GO" id="GO:0045202">
    <property type="term" value="C:synapse"/>
    <property type="evidence" value="ECO:0000314"/>
    <property type="project" value="UniProtKB"/>
</dbReference>
<dbReference type="GO" id="GO:0019904">
    <property type="term" value="F:protein domain specific binding"/>
    <property type="evidence" value="ECO:0000314"/>
    <property type="project" value="RGD"/>
</dbReference>
<dbReference type="GO" id="GO:0019901">
    <property type="term" value="F:protein kinase binding"/>
    <property type="evidence" value="ECO:0000250"/>
    <property type="project" value="UniProtKB"/>
</dbReference>
<dbReference type="GO" id="GO:0048148">
    <property type="term" value="P:behavioral response to cocaine"/>
    <property type="evidence" value="ECO:0000270"/>
    <property type="project" value="RGD"/>
</dbReference>
<dbReference type="GO" id="GO:0006887">
    <property type="term" value="P:exocytosis"/>
    <property type="evidence" value="ECO:0007669"/>
    <property type="project" value="UniProtKB-KW"/>
</dbReference>
<dbReference type="GO" id="GO:0007162">
    <property type="term" value="P:negative regulation of cell adhesion"/>
    <property type="evidence" value="ECO:0000266"/>
    <property type="project" value="RGD"/>
</dbReference>
<dbReference type="GO" id="GO:0050709">
    <property type="term" value="P:negative regulation of protein secretion"/>
    <property type="evidence" value="ECO:0000315"/>
    <property type="project" value="RGD"/>
</dbReference>
<dbReference type="GO" id="GO:0061099">
    <property type="term" value="P:negative regulation of protein tyrosine kinase activity"/>
    <property type="evidence" value="ECO:0000250"/>
    <property type="project" value="UniProtKB"/>
</dbReference>
<dbReference type="GO" id="GO:0061003">
    <property type="term" value="P:positive regulation of dendritic spine morphogenesis"/>
    <property type="evidence" value="ECO:0000314"/>
    <property type="project" value="RGD"/>
</dbReference>
<dbReference type="GO" id="GO:0061098">
    <property type="term" value="P:positive regulation of protein tyrosine kinase activity"/>
    <property type="evidence" value="ECO:0000250"/>
    <property type="project" value="UniProtKB"/>
</dbReference>
<dbReference type="GO" id="GO:0098974">
    <property type="term" value="P:postsynaptic actin cytoskeleton organization"/>
    <property type="evidence" value="ECO:0000266"/>
    <property type="project" value="RGD"/>
</dbReference>
<dbReference type="GO" id="GO:0030334">
    <property type="term" value="P:regulation of cell migration"/>
    <property type="evidence" value="ECO:0000250"/>
    <property type="project" value="UniProtKB"/>
</dbReference>
<dbReference type="GO" id="GO:0061001">
    <property type="term" value="P:regulation of dendritic spine morphogenesis"/>
    <property type="evidence" value="ECO:0000250"/>
    <property type="project" value="UniProtKB"/>
</dbReference>
<dbReference type="GO" id="GO:0051963">
    <property type="term" value="P:regulation of synapse assembly"/>
    <property type="evidence" value="ECO:0000266"/>
    <property type="project" value="RGD"/>
</dbReference>
<dbReference type="GO" id="GO:0034446">
    <property type="term" value="P:substrate adhesion-dependent cell spreading"/>
    <property type="evidence" value="ECO:0000250"/>
    <property type="project" value="UniProtKB"/>
</dbReference>
<dbReference type="FunFam" id="1.20.58.1540:FF:000001">
    <property type="entry name" value="SRC kinase signaling inhibitor 1"/>
    <property type="match status" value="1"/>
</dbReference>
<dbReference type="Gene3D" id="1.20.58.1540">
    <property type="entry name" value="Actin interacting protein 3, C-terminal domain"/>
    <property type="match status" value="1"/>
</dbReference>
<dbReference type="InterPro" id="IPR022782">
    <property type="entry name" value="AIP3-like_C"/>
</dbReference>
<dbReference type="InterPro" id="IPR051825">
    <property type="entry name" value="SRCIN1"/>
</dbReference>
<dbReference type="PANTHER" id="PTHR22741">
    <property type="entry name" value="P140CAP/SNIP-RELATED"/>
    <property type="match status" value="1"/>
</dbReference>
<dbReference type="PANTHER" id="PTHR22741:SF5">
    <property type="entry name" value="SRC KINASE SIGNALING INHIBITOR 1"/>
    <property type="match status" value="1"/>
</dbReference>
<dbReference type="Pfam" id="PF03915">
    <property type="entry name" value="AIP3"/>
    <property type="match status" value="1"/>
</dbReference>
<keyword id="KW-0025">Alternative splicing</keyword>
<keyword id="KW-0966">Cell projection</keyword>
<keyword id="KW-0175">Coiled coil</keyword>
<keyword id="KW-0963">Cytoplasm</keyword>
<keyword id="KW-0206">Cytoskeleton</keyword>
<keyword id="KW-0268">Exocytosis</keyword>
<keyword id="KW-0488">Methylation</keyword>
<keyword id="KW-0597">Phosphoprotein</keyword>
<keyword id="KW-1185">Reference proteome</keyword>
<keyword id="KW-0770">Synapse</keyword>
<reference evidence="13" key="1">
    <citation type="journal article" date="2000" name="J. Biol. Chem.">
        <title>SNIP, a novel SNAP-25-interacting protein implicated in regulated exocytosis.</title>
        <authorList>
            <person name="Chin L.-S."/>
            <person name="Nugent R.D."/>
            <person name="Raynor M.C."/>
            <person name="Vavalle J.P."/>
            <person name="Li L."/>
        </authorList>
    </citation>
    <scope>NUCLEOTIDE SEQUENCE [MRNA] (ISOFORMS 1 AND 2)</scope>
    <scope>FUNCTION</scope>
    <scope>SUBCELLULAR LOCATION</scope>
    <scope>TISSUE SPECIFICITY</scope>
    <scope>INTERACTION WITH SNAP25</scope>
</reference>
<reference key="2">
    <citation type="journal article" date="2008" name="J. Neurochem.">
        <title>Characterization of a multidomain adaptor protein, p140Cap, as part of a pre-synaptic complex.</title>
        <authorList>
            <person name="Ito H."/>
            <person name="Atsuzawa K."/>
            <person name="Sudo K."/>
            <person name="Di Stefano P."/>
            <person name="Iwamoto I."/>
            <person name="Morishita R."/>
            <person name="Takei S."/>
            <person name="Semba R."/>
            <person name="Defilippi P."/>
            <person name="Asano T."/>
            <person name="Usuda N."/>
            <person name="Nagata K."/>
        </authorList>
    </citation>
    <scope>INTERACTION WITH SORBS3</scope>
    <scope>SUBCELLULAR LOCATION</scope>
    <scope>TISSUE SPECIFICITY</scope>
    <scope>DEVELOPMENTAL STAGE</scope>
</reference>
<reference key="3">
    <citation type="journal article" date="2009" name="Neuron">
        <title>Dynamic microtubules regulate dendritic spine morphology and synaptic plasticity.</title>
        <authorList>
            <person name="Jaworski J."/>
            <person name="Kapitein L.C."/>
            <person name="Gouveia S.M."/>
            <person name="Dortland B.R."/>
            <person name="Wulf P.S."/>
            <person name="Grigoriev I."/>
            <person name="Camera P."/>
            <person name="Spangler S.A."/>
            <person name="Di Stefano P."/>
            <person name="Demmers J."/>
            <person name="Krugers H."/>
            <person name="Defilippi P."/>
            <person name="Akhmanova A."/>
            <person name="Hoogenraad C.C."/>
        </authorList>
    </citation>
    <scope>FUNCTION</scope>
    <scope>INTERACTION WITH MAPRE3</scope>
    <scope>SUBCELLULAR LOCATION</scope>
</reference>
<reference key="4">
    <citation type="journal article" date="2012" name="Nat. Commun.">
        <title>Quantitative maps of protein phosphorylation sites across 14 different rat organs and tissues.</title>
        <authorList>
            <person name="Lundby A."/>
            <person name="Secher A."/>
            <person name="Lage K."/>
            <person name="Nordsborg N.B."/>
            <person name="Dmytriyev A."/>
            <person name="Lundby C."/>
            <person name="Olsen J.V."/>
        </authorList>
    </citation>
    <scope>PHOSPHORYLATION [LARGE SCALE ANALYSIS] AT SER-98; SER-178; SER-200; SER-204; SER-260; SER-378; SER-547; SER-556; SER-900; SER-1021 AND SER-1077</scope>
    <scope>IDENTIFICATION BY MASS SPECTROMETRY [LARGE SCALE ANALYSIS]</scope>
</reference>
<name>SRCN1_RAT</name>
<evidence type="ECO:0000250" key="1"/>
<evidence type="ECO:0000250" key="2">
    <source>
        <dbReference type="UniProtKB" id="Q9C0H9"/>
    </source>
</evidence>
<evidence type="ECO:0000250" key="3">
    <source>
        <dbReference type="UniProtKB" id="Q9QWI6"/>
    </source>
</evidence>
<evidence type="ECO:0000255" key="4"/>
<evidence type="ECO:0000256" key="5">
    <source>
        <dbReference type="SAM" id="MobiDB-lite"/>
    </source>
</evidence>
<evidence type="ECO:0000269" key="6">
    <source>
    </source>
</evidence>
<evidence type="ECO:0000269" key="7">
    <source>
    </source>
</evidence>
<evidence type="ECO:0000269" key="8">
    <source>
    </source>
</evidence>
<evidence type="ECO:0000269" key="9">
    <source>
    </source>
</evidence>
<evidence type="ECO:0000303" key="10">
    <source>
    </source>
</evidence>
<evidence type="ECO:0000303" key="11">
    <source>
    </source>
</evidence>
<evidence type="ECO:0000303" key="12">
    <source>
    </source>
</evidence>
<evidence type="ECO:0000305" key="13"/>
<evidence type="ECO:0000312" key="14">
    <source>
        <dbReference type="EMBL" id="AAF25004.1"/>
    </source>
</evidence>
<evidence type="ECO:0000312" key="15">
    <source>
        <dbReference type="RGD" id="708439"/>
    </source>
</evidence>
<evidence type="ECO:0007744" key="16">
    <source>
    </source>
</evidence>
<protein>
    <recommendedName>
        <fullName evidence="13">SRC kinase signaling inhibitor 1</fullName>
    </recommendedName>
    <alternativeName>
        <fullName>SNAP-25-interacting protein</fullName>
        <shortName>SNIP</shortName>
    </alternativeName>
    <alternativeName>
        <fullName>p130Cas-associated protein</fullName>
    </alternativeName>
    <alternativeName>
        <fullName evidence="11">p140Cap</fullName>
    </alternativeName>
</protein>
<sequence length="1197" mass="129744">MQPWQCLRRFALAWWERTAEGRARSPREEVGPRDPGGRGEPDPERSSPPMLSADDAEYPREYRTLGGGGSGGSGGRRFSNVGLVHTSERRHTVIAAQSLEALSGLQKADADRKRDAFMDHLKSKYPQHALALRGQQDRMREQQPNYWSFKTRSSRHTQGAQPGLADQAAKLSYASAESLETMSEAELPLGFSRMNRFRQSLPLSRSASQTKLRSPGVLFLQFGEETRRVHITHEVSSLDTLHALIAHMFPQKLTMGMLKSPNTAILIKDEARNVFYELEDVRDIQDRSIIKIYRKEPLYAAFPGSHLTNGDLRREMVYASRESSPTRRLNNLSPASHLASSSPPPGLPSGLPSGLPSGSPSRSRLSYAGGRPPSYAGSPVHHAAERLGGAPTSQGVSPSPSAILERRDVKPDEDLAGKAGGMVLVKGEGLYADPYGLLHEGRLSLAAAAGDPFAYPGAGGLYKRGSVRSLSTYSAAALQSDLEDSLYKAGAGGPLYGDGYGFRLPPSSPQKLADVSAPSGGPPPPHSPYSGPPSRGSPVRQSFRKDSGSSSVFAESPGGKARSTGASTAGAPPSELFPGPGERSLVGFGPPVPAKDTETRERMEAMEKQIASLTGLVQSALLRGSEPETPSEKIEGSNGAATPSAPVCGSGSRSSGATPVSGPPPPAVSSTPAGQPTAVSRLQMQMHLRGLQNSASDLRGQLQQLRKLQLQNQESVRALLKRTEAELSMRVSEAARRQEDPLQRQRTLVEEERLRYLNDEELITQQLNDLEKSVEKIQRDVAHNHRLVPGPELEEKALVLKQLGETLTELKAHFPGLQSKMRVVLRVEVEAVKFLKEEPQRLDGLLKRCRVVTDTLAQIRRQVDEGVWPPPNNLLNQSPKKVAAETDFSKGLDFEIPPPSPPLNLHELSGPAEGTPLTPKSGNPTKGLDAPSKRNMDKAVSVEAAERDWEEKRAALTQYSAKDINRLLEETQAELLKAIPDLDCASKTHPGPTPTPDHKPPKAPHGQKAAPRTEPSGRRGSDELTVPRYRTEKPSKSPPPPPPRRSFPSSHGLTTTRTGEVVVTSKKDSVFIKKAESEELEIQKPQVKLRRAVSEVVRPASTPPIMASAIKDEDDEERIIAELESGGGSVPPMKVVTPGASRLKAAQGPAGSPDKGKHGKQRTEYMRIQAQQQVRVGYQAPRPLEGCTPRLCYMPLS</sequence>